<protein>
    <recommendedName>
        <fullName>Cytotoxin 4N</fullName>
    </recommendedName>
    <alternativeName>
        <fullName>Cardiotoxin-4N</fullName>
        <shortName>CTX-4N</shortName>
    </alternativeName>
</protein>
<proteinExistence type="inferred from homology"/>
<feature type="signal peptide" evidence="1">
    <location>
        <begin position="1"/>
        <end position="21"/>
    </location>
</feature>
<feature type="chain" id="PRO_0000035376" description="Cytotoxin 4N">
    <location>
        <begin position="22"/>
        <end position="81"/>
    </location>
</feature>
<feature type="disulfide bond" evidence="2">
    <location>
        <begin position="24"/>
        <end position="42"/>
    </location>
</feature>
<feature type="disulfide bond" evidence="2">
    <location>
        <begin position="35"/>
        <end position="59"/>
    </location>
</feature>
<feature type="disulfide bond" evidence="2">
    <location>
        <begin position="63"/>
        <end position="74"/>
    </location>
</feature>
<feature type="disulfide bond" evidence="2">
    <location>
        <begin position="75"/>
        <end position="80"/>
    </location>
</feature>
<reference key="1">
    <citation type="journal article" date="2004" name="Biochem. Genet.">
        <title>Molecular cloning and evolution of the genes encoding the precursors of taiwan cobra cardiotoxin and cardiotoxin-like basic protein.</title>
        <authorList>
            <person name="Chang L.-S."/>
            <person name="Lin S.-K."/>
            <person name="Chung C."/>
        </authorList>
    </citation>
    <scope>NUCLEOTIDE SEQUENCE [GENOMIC DNA]</scope>
    <source>
        <tissue>Liver</tissue>
    </source>
</reference>
<comment type="function">
    <text evidence="2 3">Shows cytolytic activity on many different cells by forming pore in lipid membranes. In vivo, increases heart rate or kills the animal by cardiac arrest. In addition, it binds to heparin with high affinity, interacts with Kv channel-interacting protein 1 (KCNIP1) in a calcium-independent manner, and binds to integrin alpha-V/beta-3 (ITGAV/ITGB3) with moderate affinity.</text>
</comment>
<comment type="subunit">
    <text evidence="2">Monomer in solution; Homodimer and oligomer in the presence of negatively charged lipids forming a pore with a size ranging between 20 and 30 Angstroms.</text>
</comment>
<comment type="subcellular location">
    <subcellularLocation>
        <location evidence="1">Secreted</location>
    </subcellularLocation>
    <subcellularLocation>
        <location evidence="2">Target cell membrane</location>
    </subcellularLocation>
</comment>
<comment type="tissue specificity">
    <text evidence="4">Expressed by the venom gland.</text>
</comment>
<comment type="miscellaneous">
    <text evidence="4">Is classified as a S-type cytotoxin, since a serine residue stands at position 49 (Ser-29 in standard classification).</text>
</comment>
<comment type="similarity">
    <text evidence="4">Belongs to the three-finger toxin family. Short-chain subfamily. Type IA cytotoxin sub-subfamily.</text>
</comment>
<keyword id="KW-0123">Cardiotoxin</keyword>
<keyword id="KW-0204">Cytolysis</keyword>
<keyword id="KW-1015">Disulfide bond</keyword>
<keyword id="KW-0472">Membrane</keyword>
<keyword id="KW-0964">Secreted</keyword>
<keyword id="KW-0732">Signal</keyword>
<keyword id="KW-1052">Target cell membrane</keyword>
<keyword id="KW-1053">Target membrane</keyword>
<keyword id="KW-0800">Toxin</keyword>
<sequence length="81" mass="9099">MKTLLLTLVVVTIVCLDLGYTRKCNKLVPLFYKTCPAGKNLCYKMFMVSNLTVPVKRGCIDVCPKSSLLVKYVCCNTDRCN</sequence>
<accession>Q9W6W9</accession>
<dbReference type="EMBL" id="AJ238737">
    <property type="protein sequence ID" value="CAB42057.1"/>
    <property type="molecule type" value="Genomic_DNA"/>
</dbReference>
<dbReference type="SMR" id="Q9W6W9"/>
<dbReference type="GO" id="GO:0005576">
    <property type="term" value="C:extracellular region"/>
    <property type="evidence" value="ECO:0007669"/>
    <property type="project" value="UniProtKB-SubCell"/>
</dbReference>
<dbReference type="GO" id="GO:0016020">
    <property type="term" value="C:membrane"/>
    <property type="evidence" value="ECO:0007669"/>
    <property type="project" value="UniProtKB-KW"/>
</dbReference>
<dbReference type="GO" id="GO:0044218">
    <property type="term" value="C:other organism cell membrane"/>
    <property type="evidence" value="ECO:0007669"/>
    <property type="project" value="UniProtKB-KW"/>
</dbReference>
<dbReference type="GO" id="GO:0090729">
    <property type="term" value="F:toxin activity"/>
    <property type="evidence" value="ECO:0007669"/>
    <property type="project" value="UniProtKB-KW"/>
</dbReference>
<dbReference type="GO" id="GO:0031640">
    <property type="term" value="P:killing of cells of another organism"/>
    <property type="evidence" value="ECO:0007669"/>
    <property type="project" value="UniProtKB-KW"/>
</dbReference>
<dbReference type="CDD" id="cd00206">
    <property type="entry name" value="TFP_snake_toxin"/>
    <property type="match status" value="1"/>
</dbReference>
<dbReference type="FunFam" id="2.10.60.10:FF:000024">
    <property type="entry name" value="Cytotoxin 1"/>
    <property type="match status" value="1"/>
</dbReference>
<dbReference type="Gene3D" id="2.10.60.10">
    <property type="entry name" value="CD59"/>
    <property type="match status" value="1"/>
</dbReference>
<dbReference type="InterPro" id="IPR003572">
    <property type="entry name" value="Cytotoxin_Cobra"/>
</dbReference>
<dbReference type="InterPro" id="IPR003571">
    <property type="entry name" value="Snake_3FTx"/>
</dbReference>
<dbReference type="InterPro" id="IPR045860">
    <property type="entry name" value="Snake_toxin-like_sf"/>
</dbReference>
<dbReference type="InterPro" id="IPR018354">
    <property type="entry name" value="Snake_toxin_con_site"/>
</dbReference>
<dbReference type="InterPro" id="IPR054131">
    <property type="entry name" value="Toxin_cobra-type"/>
</dbReference>
<dbReference type="Pfam" id="PF21947">
    <property type="entry name" value="Toxin_cobra-type"/>
    <property type="match status" value="1"/>
</dbReference>
<dbReference type="PRINTS" id="PR00282">
    <property type="entry name" value="CYTOTOXIN"/>
</dbReference>
<dbReference type="SUPFAM" id="SSF57302">
    <property type="entry name" value="Snake toxin-like"/>
    <property type="match status" value="1"/>
</dbReference>
<dbReference type="PROSITE" id="PS00272">
    <property type="entry name" value="SNAKE_TOXIN"/>
    <property type="match status" value="1"/>
</dbReference>
<name>3SA4N_NAJAT</name>
<evidence type="ECO:0000250" key="1"/>
<evidence type="ECO:0000250" key="2">
    <source>
        <dbReference type="UniProtKB" id="P60301"/>
    </source>
</evidence>
<evidence type="ECO:0000250" key="3">
    <source>
        <dbReference type="UniProtKB" id="P60304"/>
    </source>
</evidence>
<evidence type="ECO:0000305" key="4"/>
<organism>
    <name type="scientific">Naja atra</name>
    <name type="common">Chinese cobra</name>
    <dbReference type="NCBI Taxonomy" id="8656"/>
    <lineage>
        <taxon>Eukaryota</taxon>
        <taxon>Metazoa</taxon>
        <taxon>Chordata</taxon>
        <taxon>Craniata</taxon>
        <taxon>Vertebrata</taxon>
        <taxon>Euteleostomi</taxon>
        <taxon>Lepidosauria</taxon>
        <taxon>Squamata</taxon>
        <taxon>Bifurcata</taxon>
        <taxon>Unidentata</taxon>
        <taxon>Episquamata</taxon>
        <taxon>Toxicofera</taxon>
        <taxon>Serpentes</taxon>
        <taxon>Colubroidea</taxon>
        <taxon>Elapidae</taxon>
        <taxon>Elapinae</taxon>
        <taxon>Naja</taxon>
    </lineage>
</organism>